<name>MALK_VIBVU</name>
<dbReference type="EC" id="7.5.2.1" evidence="1"/>
<dbReference type="EMBL" id="AE016796">
    <property type="protein sequence ID" value="AAO08446.1"/>
    <property type="molecule type" value="Genomic_DNA"/>
</dbReference>
<dbReference type="RefSeq" id="WP_011082430.1">
    <property type="nucleotide sequence ID" value="NC_004460.2"/>
</dbReference>
<dbReference type="SMR" id="Q8D3V0"/>
<dbReference type="GeneID" id="93898384"/>
<dbReference type="KEGG" id="vvu:VV2_1584"/>
<dbReference type="HOGENOM" id="CLU_000604_1_1_6"/>
<dbReference type="Proteomes" id="UP000002275">
    <property type="component" value="Chromosome 2"/>
</dbReference>
<dbReference type="GO" id="GO:0055052">
    <property type="term" value="C:ATP-binding cassette (ABC) transporter complex, substrate-binding subunit-containing"/>
    <property type="evidence" value="ECO:0007669"/>
    <property type="project" value="TreeGrafter"/>
</dbReference>
<dbReference type="GO" id="GO:1990060">
    <property type="term" value="C:maltose transport complex"/>
    <property type="evidence" value="ECO:0007669"/>
    <property type="project" value="TreeGrafter"/>
</dbReference>
<dbReference type="GO" id="GO:0015423">
    <property type="term" value="F:ABC-type maltose transporter activity"/>
    <property type="evidence" value="ECO:0007669"/>
    <property type="project" value="UniProtKB-EC"/>
</dbReference>
<dbReference type="GO" id="GO:0005524">
    <property type="term" value="F:ATP binding"/>
    <property type="evidence" value="ECO:0007669"/>
    <property type="project" value="UniProtKB-KW"/>
</dbReference>
<dbReference type="GO" id="GO:0016887">
    <property type="term" value="F:ATP hydrolysis activity"/>
    <property type="evidence" value="ECO:0007669"/>
    <property type="project" value="InterPro"/>
</dbReference>
<dbReference type="CDD" id="cd03301">
    <property type="entry name" value="ABC_MalK_N"/>
    <property type="match status" value="1"/>
</dbReference>
<dbReference type="FunFam" id="3.40.50.300:FF:000042">
    <property type="entry name" value="Maltose/maltodextrin ABC transporter, ATP-binding protein"/>
    <property type="match status" value="1"/>
</dbReference>
<dbReference type="FunFam" id="2.40.50.100:FF:000014">
    <property type="entry name" value="Maltose/maltodextrin import ATP-binding protein MalK"/>
    <property type="match status" value="1"/>
</dbReference>
<dbReference type="Gene3D" id="2.40.50.100">
    <property type="match status" value="1"/>
</dbReference>
<dbReference type="Gene3D" id="2.40.50.140">
    <property type="entry name" value="Nucleic acid-binding proteins"/>
    <property type="match status" value="1"/>
</dbReference>
<dbReference type="Gene3D" id="3.40.50.300">
    <property type="entry name" value="P-loop containing nucleotide triphosphate hydrolases"/>
    <property type="match status" value="1"/>
</dbReference>
<dbReference type="InterPro" id="IPR003593">
    <property type="entry name" value="AAA+_ATPase"/>
</dbReference>
<dbReference type="InterPro" id="IPR003439">
    <property type="entry name" value="ABC_transporter-like_ATP-bd"/>
</dbReference>
<dbReference type="InterPro" id="IPR017871">
    <property type="entry name" value="ABC_transporter-like_CS"/>
</dbReference>
<dbReference type="InterPro" id="IPR015855">
    <property type="entry name" value="ABC_transpr_MalK-like"/>
</dbReference>
<dbReference type="InterPro" id="IPR047641">
    <property type="entry name" value="ABC_transpr_MalK/UgpC-like"/>
</dbReference>
<dbReference type="InterPro" id="IPR008995">
    <property type="entry name" value="Mo/tungstate-bd_C_term_dom"/>
</dbReference>
<dbReference type="InterPro" id="IPR012340">
    <property type="entry name" value="NA-bd_OB-fold"/>
</dbReference>
<dbReference type="InterPro" id="IPR027417">
    <property type="entry name" value="P-loop_NTPase"/>
</dbReference>
<dbReference type="InterPro" id="IPR013611">
    <property type="entry name" value="Transp-assoc_OB_typ2"/>
</dbReference>
<dbReference type="NCBIfam" id="NF008233">
    <property type="entry name" value="PRK11000.1"/>
    <property type="match status" value="1"/>
</dbReference>
<dbReference type="NCBIfam" id="NF008653">
    <property type="entry name" value="PRK11650.1"/>
    <property type="match status" value="1"/>
</dbReference>
<dbReference type="PANTHER" id="PTHR43875">
    <property type="entry name" value="MALTODEXTRIN IMPORT ATP-BINDING PROTEIN MSMX"/>
    <property type="match status" value="1"/>
</dbReference>
<dbReference type="PANTHER" id="PTHR43875:SF3">
    <property type="entry name" value="MALTOSE_MALTODEXTRIN IMPORT ATP-BINDING PROTEIN MALK"/>
    <property type="match status" value="1"/>
</dbReference>
<dbReference type="Pfam" id="PF00005">
    <property type="entry name" value="ABC_tran"/>
    <property type="match status" value="1"/>
</dbReference>
<dbReference type="Pfam" id="PF08402">
    <property type="entry name" value="TOBE_2"/>
    <property type="match status" value="1"/>
</dbReference>
<dbReference type="SMART" id="SM00382">
    <property type="entry name" value="AAA"/>
    <property type="match status" value="1"/>
</dbReference>
<dbReference type="SUPFAM" id="SSF50331">
    <property type="entry name" value="MOP-like"/>
    <property type="match status" value="1"/>
</dbReference>
<dbReference type="SUPFAM" id="SSF52540">
    <property type="entry name" value="P-loop containing nucleoside triphosphate hydrolases"/>
    <property type="match status" value="1"/>
</dbReference>
<dbReference type="PROSITE" id="PS00211">
    <property type="entry name" value="ABC_TRANSPORTER_1"/>
    <property type="match status" value="1"/>
</dbReference>
<dbReference type="PROSITE" id="PS50893">
    <property type="entry name" value="ABC_TRANSPORTER_2"/>
    <property type="match status" value="1"/>
</dbReference>
<dbReference type="PROSITE" id="PS51245">
    <property type="entry name" value="MALK"/>
    <property type="match status" value="1"/>
</dbReference>
<protein>
    <recommendedName>
        <fullName evidence="1">Maltose/maltodextrin import ATP-binding protein MalK</fullName>
        <ecNumber evidence="1">7.5.2.1</ecNumber>
    </recommendedName>
</protein>
<feature type="chain" id="PRO_0000092486" description="Maltose/maltodextrin import ATP-binding protein MalK">
    <location>
        <begin position="1"/>
        <end position="371"/>
    </location>
</feature>
<feature type="domain" description="ABC transporter" evidence="1">
    <location>
        <begin position="4"/>
        <end position="234"/>
    </location>
</feature>
<feature type="binding site" evidence="1">
    <location>
        <begin position="36"/>
        <end position="43"/>
    </location>
    <ligand>
        <name>ATP</name>
        <dbReference type="ChEBI" id="CHEBI:30616"/>
    </ligand>
</feature>
<keyword id="KW-0067">ATP-binding</keyword>
<keyword id="KW-0997">Cell inner membrane</keyword>
<keyword id="KW-1003">Cell membrane</keyword>
<keyword id="KW-0472">Membrane</keyword>
<keyword id="KW-0547">Nucleotide-binding</keyword>
<keyword id="KW-0762">Sugar transport</keyword>
<keyword id="KW-1278">Translocase</keyword>
<keyword id="KW-0813">Transport</keyword>
<comment type="function">
    <text evidence="1">Part of the ABC transporter complex MalEFGK involved in maltose/maltodextrin import. Responsible for energy coupling to the transport system.</text>
</comment>
<comment type="catalytic activity">
    <reaction evidence="1">
        <text>D-maltose(out) + ATP + H2O = D-maltose(in) + ADP + phosphate + H(+)</text>
        <dbReference type="Rhea" id="RHEA:22132"/>
        <dbReference type="ChEBI" id="CHEBI:15377"/>
        <dbReference type="ChEBI" id="CHEBI:15378"/>
        <dbReference type="ChEBI" id="CHEBI:17306"/>
        <dbReference type="ChEBI" id="CHEBI:30616"/>
        <dbReference type="ChEBI" id="CHEBI:43474"/>
        <dbReference type="ChEBI" id="CHEBI:456216"/>
        <dbReference type="EC" id="7.5.2.1"/>
    </reaction>
</comment>
<comment type="subunit">
    <text evidence="1">The complex is composed of two ATP-binding proteins (MalK), two transmembrane proteins (MalG and MalK) and a solute-binding protein (MalE).</text>
</comment>
<comment type="subcellular location">
    <subcellularLocation>
        <location evidence="1">Cell inner membrane</location>
        <topology evidence="1">Peripheral membrane protein</topology>
    </subcellularLocation>
</comment>
<comment type="similarity">
    <text evidence="1">Belongs to the ABC transporter superfamily. Maltooligosaccharide importer (TC 3.A.1.1.1) family.</text>
</comment>
<reference key="1">
    <citation type="submission" date="2002-12" db="EMBL/GenBank/DDBJ databases">
        <title>Complete genome sequence of Vibrio vulnificus CMCP6.</title>
        <authorList>
            <person name="Rhee J.H."/>
            <person name="Kim S.Y."/>
            <person name="Chung S.S."/>
            <person name="Kim J.J."/>
            <person name="Moon Y.H."/>
            <person name="Jeong H."/>
            <person name="Choy H.E."/>
        </authorList>
    </citation>
    <scope>NUCLEOTIDE SEQUENCE [LARGE SCALE GENOMIC DNA]</scope>
    <source>
        <strain>CMCP6</strain>
    </source>
</reference>
<sequence length="371" mass="41042">MASVTLKNVCKAYGDVLISKNVDLEINEGEFVVFVGPSGCGKSTLLRCIAGLEDITSGDLYIGEERMNDVEPSKRGVGMVFQSYALYPHLNLYDNMSFGLKLAKADKKEIDKRVEQAAEILQLGHLLERLPKALSGGQRQRVAIGRTLVSQPKVFLLDEPLSNLDAALRVQMRAQITKLQRQLGCTMIYVTHDQVEAMTMADKIVVLDGGFVSQVGKPLELYHYPENRFVAGFIGSPKMNFMSVQIVDVESERVQVKLSNGVTFWVPVDGTTVNKGDRMSLGVRPEHLVSSAQGDAVIDGEVMIVEKLGNETQVYLNLESADADVIYRQPDTLDVDSGDRLEIGIPAHRCHLFHSDGRACKRLFNEKGVER</sequence>
<gene>
    <name evidence="1" type="primary">malK</name>
    <name type="ordered locus">VV2_1584</name>
</gene>
<proteinExistence type="inferred from homology"/>
<evidence type="ECO:0000255" key="1">
    <source>
        <dbReference type="HAMAP-Rule" id="MF_01709"/>
    </source>
</evidence>
<organism>
    <name type="scientific">Vibrio vulnificus (strain CMCP6)</name>
    <dbReference type="NCBI Taxonomy" id="216895"/>
    <lineage>
        <taxon>Bacteria</taxon>
        <taxon>Pseudomonadati</taxon>
        <taxon>Pseudomonadota</taxon>
        <taxon>Gammaproteobacteria</taxon>
        <taxon>Vibrionales</taxon>
        <taxon>Vibrionaceae</taxon>
        <taxon>Vibrio</taxon>
    </lineage>
</organism>
<accession>Q8D3V0</accession>